<protein>
    <recommendedName>
        <fullName evidence="1">Heat-inducible transcription repressor HrcA</fullName>
    </recommendedName>
</protein>
<keyword id="KW-0678">Repressor</keyword>
<keyword id="KW-0346">Stress response</keyword>
<keyword id="KW-0804">Transcription</keyword>
<keyword id="KW-0805">Transcription regulation</keyword>
<gene>
    <name evidence="1" type="primary">hrcA</name>
    <name type="ordered locus">BAbS19_I01620</name>
</gene>
<dbReference type="EMBL" id="CP000887">
    <property type="protein sequence ID" value="ACD71716.1"/>
    <property type="molecule type" value="Genomic_DNA"/>
</dbReference>
<dbReference type="RefSeq" id="WP_002965420.1">
    <property type="nucleotide sequence ID" value="NC_010742.1"/>
</dbReference>
<dbReference type="SMR" id="B2S8G3"/>
<dbReference type="GeneID" id="93017361"/>
<dbReference type="KEGG" id="bmc:BAbS19_I01620"/>
<dbReference type="HOGENOM" id="CLU_050019_0_0_5"/>
<dbReference type="Proteomes" id="UP000002565">
    <property type="component" value="Chromosome 1"/>
</dbReference>
<dbReference type="GO" id="GO:0003677">
    <property type="term" value="F:DNA binding"/>
    <property type="evidence" value="ECO:0007669"/>
    <property type="project" value="InterPro"/>
</dbReference>
<dbReference type="GO" id="GO:0045892">
    <property type="term" value="P:negative regulation of DNA-templated transcription"/>
    <property type="evidence" value="ECO:0007669"/>
    <property type="project" value="UniProtKB-UniRule"/>
</dbReference>
<dbReference type="Gene3D" id="3.30.450.40">
    <property type="match status" value="1"/>
</dbReference>
<dbReference type="Gene3D" id="3.30.390.60">
    <property type="entry name" value="Heat-inducible transcription repressor hrca homolog, domain 3"/>
    <property type="match status" value="1"/>
</dbReference>
<dbReference type="Gene3D" id="1.10.10.10">
    <property type="entry name" value="Winged helix-like DNA-binding domain superfamily/Winged helix DNA-binding domain"/>
    <property type="match status" value="1"/>
</dbReference>
<dbReference type="HAMAP" id="MF_00081">
    <property type="entry name" value="HrcA"/>
    <property type="match status" value="1"/>
</dbReference>
<dbReference type="InterPro" id="IPR029016">
    <property type="entry name" value="GAF-like_dom_sf"/>
</dbReference>
<dbReference type="InterPro" id="IPR002571">
    <property type="entry name" value="HrcA"/>
</dbReference>
<dbReference type="InterPro" id="IPR021153">
    <property type="entry name" value="HrcA_C"/>
</dbReference>
<dbReference type="InterPro" id="IPR036388">
    <property type="entry name" value="WH-like_DNA-bd_sf"/>
</dbReference>
<dbReference type="InterPro" id="IPR036390">
    <property type="entry name" value="WH_DNA-bd_sf"/>
</dbReference>
<dbReference type="InterPro" id="IPR023120">
    <property type="entry name" value="WHTH_transcript_rep_HrcA_IDD"/>
</dbReference>
<dbReference type="NCBIfam" id="TIGR00331">
    <property type="entry name" value="hrcA"/>
    <property type="match status" value="1"/>
</dbReference>
<dbReference type="PANTHER" id="PTHR34824">
    <property type="entry name" value="HEAT-INDUCIBLE TRANSCRIPTION REPRESSOR HRCA"/>
    <property type="match status" value="1"/>
</dbReference>
<dbReference type="PANTHER" id="PTHR34824:SF1">
    <property type="entry name" value="HEAT-INDUCIBLE TRANSCRIPTION REPRESSOR HRCA"/>
    <property type="match status" value="1"/>
</dbReference>
<dbReference type="Pfam" id="PF01628">
    <property type="entry name" value="HrcA"/>
    <property type="match status" value="1"/>
</dbReference>
<dbReference type="PIRSF" id="PIRSF005485">
    <property type="entry name" value="HrcA"/>
    <property type="match status" value="1"/>
</dbReference>
<dbReference type="SUPFAM" id="SSF55781">
    <property type="entry name" value="GAF domain-like"/>
    <property type="match status" value="1"/>
</dbReference>
<dbReference type="SUPFAM" id="SSF46785">
    <property type="entry name" value="Winged helix' DNA-binding domain"/>
    <property type="match status" value="1"/>
</dbReference>
<proteinExistence type="inferred from homology"/>
<accession>B2S8G3</accession>
<evidence type="ECO:0000255" key="1">
    <source>
        <dbReference type="HAMAP-Rule" id="MF_00081"/>
    </source>
</evidence>
<reference key="1">
    <citation type="journal article" date="2008" name="PLoS ONE">
        <title>Genome sequence of Brucella abortus vaccine strain S19 compared to virulent strains yields candidate virulence genes.</title>
        <authorList>
            <person name="Crasta O.R."/>
            <person name="Folkerts O."/>
            <person name="Fei Z."/>
            <person name="Mane S.P."/>
            <person name="Evans C."/>
            <person name="Martino-Catt S."/>
            <person name="Bricker B."/>
            <person name="Yu G."/>
            <person name="Du L."/>
            <person name="Sobral B.W."/>
        </authorList>
    </citation>
    <scope>NUCLEOTIDE SEQUENCE [LARGE SCALE GENOMIC DNA]</scope>
    <source>
        <strain>S19</strain>
    </source>
</reference>
<organism>
    <name type="scientific">Brucella abortus (strain S19)</name>
    <dbReference type="NCBI Taxonomy" id="430066"/>
    <lineage>
        <taxon>Bacteria</taxon>
        <taxon>Pseudomonadati</taxon>
        <taxon>Pseudomonadota</taxon>
        <taxon>Alphaproteobacteria</taxon>
        <taxon>Hyphomicrobiales</taxon>
        <taxon>Brucellaceae</taxon>
        <taxon>Brucella/Ochrobactrum group</taxon>
        <taxon>Brucella</taxon>
    </lineage>
</organism>
<feature type="chain" id="PRO_1000092794" description="Heat-inducible transcription repressor HrcA">
    <location>
        <begin position="1"/>
        <end position="356"/>
    </location>
</feature>
<comment type="function">
    <text evidence="1">Negative regulator of class I heat shock genes (grpE-dnaK-dnaJ and groELS operons). Prevents heat-shock induction of these operons.</text>
</comment>
<comment type="similarity">
    <text evidence="1">Belongs to the HrcA family.</text>
</comment>
<name>HRCA_BRUA1</name>
<sequence length="356" mass="39094">MMRPPEHQLLSSLDQRSRDIFRLIVETYLNDGDPVGSRNLSRLLPHTLSPATIRNVMSDLEHLGLIYAPHISAGRLPTQIGLRFFVDAFLEVGDLPPEERSSIEAQVRAAGTSNSVESVLTEASQVLSGLSRGAGLVLTNKTDVALKHIEFVRLEPMRALAVLVMQNGDVENRVIDLPAGISTSQLIEASNFLNAHIHGHTLSEAKSELRKLSEETRRELDQLSQELVAKGLAVWSGAGADQPARLIVRGRANLLENVHAQEDIERLRHLFDDLETKDGMVQLLDLAEAGSGVRIFIGSENKLFSLSGSSLVVAPYRDSEQRVIGALGVIGPTRLNYARIVPMVDYTAQIVSRLLR</sequence>